<keyword id="KW-1185">Reference proteome</keyword>
<keyword id="KW-0687">Ribonucleoprotein</keyword>
<keyword id="KW-0689">Ribosomal protein</keyword>
<keyword id="KW-0694">RNA-binding</keyword>
<keyword id="KW-0699">rRNA-binding</keyword>
<keyword id="KW-0820">tRNA-binding</keyword>
<evidence type="ECO:0000255" key="1">
    <source>
        <dbReference type="HAMAP-Rule" id="MF_00480"/>
    </source>
</evidence>
<evidence type="ECO:0000305" key="2"/>
<comment type="function">
    <text evidence="1">One of the primary rRNA binding proteins, it binds directly to 16S rRNA where it nucleates assembly of the head domain of the 30S subunit. Is located at the subunit interface close to the decoding center, probably blocks exit of the E-site tRNA.</text>
</comment>
<comment type="subunit">
    <text evidence="1">Part of the 30S ribosomal subunit. Contacts proteins S9 and S11.</text>
</comment>
<comment type="similarity">
    <text evidence="1">Belongs to the universal ribosomal protein uS7 family.</text>
</comment>
<reference key="1">
    <citation type="journal article" date="2003" name="Nature">
        <title>Genome sequence of Bacillus cereus and comparative analysis with Bacillus anthracis.</title>
        <authorList>
            <person name="Ivanova N."/>
            <person name="Sorokin A."/>
            <person name="Anderson I."/>
            <person name="Galleron N."/>
            <person name="Candelon B."/>
            <person name="Kapatral V."/>
            <person name="Bhattacharyya A."/>
            <person name="Reznik G."/>
            <person name="Mikhailova N."/>
            <person name="Lapidus A."/>
            <person name="Chu L."/>
            <person name="Mazur M."/>
            <person name="Goltsman E."/>
            <person name="Larsen N."/>
            <person name="D'Souza M."/>
            <person name="Walunas T."/>
            <person name="Grechkin Y."/>
            <person name="Pusch G."/>
            <person name="Haselkorn R."/>
            <person name="Fonstein M."/>
            <person name="Ehrlich S.D."/>
            <person name="Overbeek R."/>
            <person name="Kyrpides N.C."/>
        </authorList>
    </citation>
    <scope>NUCLEOTIDE SEQUENCE [LARGE SCALE GENOMIC DNA]</scope>
    <source>
        <strain>ATCC 14579 / DSM 31 / CCUG 7414 / JCM 2152 / NBRC 15305 / NCIMB 9373 / NCTC 2599 / NRRL B-3711</strain>
    </source>
</reference>
<feature type="chain" id="PRO_0000124212" description="Small ribosomal subunit protein uS7">
    <location>
        <begin position="1"/>
        <end position="156"/>
    </location>
</feature>
<proteinExistence type="inferred from homology"/>
<dbReference type="EMBL" id="AE016877">
    <property type="protein sequence ID" value="AAP07208.1"/>
    <property type="molecule type" value="Genomic_DNA"/>
</dbReference>
<dbReference type="RefSeq" id="NP_830007.1">
    <property type="nucleotide sequence ID" value="NC_004722.1"/>
</dbReference>
<dbReference type="RefSeq" id="WP_001137491.1">
    <property type="nucleotide sequence ID" value="NZ_CP138336.1"/>
</dbReference>
<dbReference type="SMR" id="Q81J44"/>
<dbReference type="STRING" id="226900.BC_0126"/>
<dbReference type="MetOSite" id="Q81J44"/>
<dbReference type="KEGG" id="bce:BC0126"/>
<dbReference type="PATRIC" id="fig|226900.8.peg.128"/>
<dbReference type="HOGENOM" id="CLU_072226_1_1_9"/>
<dbReference type="OrthoDB" id="9807653at2"/>
<dbReference type="Proteomes" id="UP000001417">
    <property type="component" value="Chromosome"/>
</dbReference>
<dbReference type="GO" id="GO:0022627">
    <property type="term" value="C:cytosolic small ribosomal subunit"/>
    <property type="evidence" value="ECO:0000318"/>
    <property type="project" value="GO_Central"/>
</dbReference>
<dbReference type="GO" id="GO:0005840">
    <property type="term" value="C:ribosome"/>
    <property type="evidence" value="ECO:0000318"/>
    <property type="project" value="GO_Central"/>
</dbReference>
<dbReference type="GO" id="GO:0003729">
    <property type="term" value="F:mRNA binding"/>
    <property type="evidence" value="ECO:0000318"/>
    <property type="project" value="GO_Central"/>
</dbReference>
<dbReference type="GO" id="GO:0019843">
    <property type="term" value="F:rRNA binding"/>
    <property type="evidence" value="ECO:0000318"/>
    <property type="project" value="GO_Central"/>
</dbReference>
<dbReference type="GO" id="GO:0003735">
    <property type="term" value="F:structural constituent of ribosome"/>
    <property type="evidence" value="ECO:0000318"/>
    <property type="project" value="GO_Central"/>
</dbReference>
<dbReference type="GO" id="GO:0000049">
    <property type="term" value="F:tRNA binding"/>
    <property type="evidence" value="ECO:0007669"/>
    <property type="project" value="UniProtKB-UniRule"/>
</dbReference>
<dbReference type="GO" id="GO:0000028">
    <property type="term" value="P:ribosomal small subunit assembly"/>
    <property type="evidence" value="ECO:0000318"/>
    <property type="project" value="GO_Central"/>
</dbReference>
<dbReference type="GO" id="GO:0006412">
    <property type="term" value="P:translation"/>
    <property type="evidence" value="ECO:0000318"/>
    <property type="project" value="GO_Central"/>
</dbReference>
<dbReference type="CDD" id="cd14869">
    <property type="entry name" value="uS7_Bacteria"/>
    <property type="match status" value="1"/>
</dbReference>
<dbReference type="FunFam" id="1.10.455.10:FF:000001">
    <property type="entry name" value="30S ribosomal protein S7"/>
    <property type="match status" value="1"/>
</dbReference>
<dbReference type="Gene3D" id="1.10.455.10">
    <property type="entry name" value="Ribosomal protein S7 domain"/>
    <property type="match status" value="1"/>
</dbReference>
<dbReference type="HAMAP" id="MF_00480_B">
    <property type="entry name" value="Ribosomal_uS7_B"/>
    <property type="match status" value="1"/>
</dbReference>
<dbReference type="InterPro" id="IPR000235">
    <property type="entry name" value="Ribosomal_uS7"/>
</dbReference>
<dbReference type="InterPro" id="IPR005717">
    <property type="entry name" value="Ribosomal_uS7_bac/org-type"/>
</dbReference>
<dbReference type="InterPro" id="IPR020606">
    <property type="entry name" value="Ribosomal_uS7_CS"/>
</dbReference>
<dbReference type="InterPro" id="IPR023798">
    <property type="entry name" value="Ribosomal_uS7_dom"/>
</dbReference>
<dbReference type="InterPro" id="IPR036823">
    <property type="entry name" value="Ribosomal_uS7_dom_sf"/>
</dbReference>
<dbReference type="NCBIfam" id="TIGR01029">
    <property type="entry name" value="rpsG_bact"/>
    <property type="match status" value="1"/>
</dbReference>
<dbReference type="PANTHER" id="PTHR11205">
    <property type="entry name" value="RIBOSOMAL PROTEIN S7"/>
    <property type="match status" value="1"/>
</dbReference>
<dbReference type="Pfam" id="PF00177">
    <property type="entry name" value="Ribosomal_S7"/>
    <property type="match status" value="1"/>
</dbReference>
<dbReference type="PIRSF" id="PIRSF002122">
    <property type="entry name" value="RPS7p_RPS7a_RPS5e_RPS7o"/>
    <property type="match status" value="1"/>
</dbReference>
<dbReference type="SUPFAM" id="SSF47973">
    <property type="entry name" value="Ribosomal protein S7"/>
    <property type="match status" value="1"/>
</dbReference>
<dbReference type="PROSITE" id="PS00052">
    <property type="entry name" value="RIBOSOMAL_S7"/>
    <property type="match status" value="1"/>
</dbReference>
<protein>
    <recommendedName>
        <fullName evidence="1">Small ribosomal subunit protein uS7</fullName>
    </recommendedName>
    <alternativeName>
        <fullName evidence="2">30S ribosomal protein S7</fullName>
    </alternativeName>
</protein>
<accession>Q81J44</accession>
<gene>
    <name evidence="1" type="primary">rpsG</name>
    <name type="ordered locus">BC_0126</name>
</gene>
<name>RS7_BACCR</name>
<sequence>MPRKGPVAKRDVLPDPMYNSKLVTRLINKMMVDGKKGKSQTILYNAFDIVNERTGKEPMEVFEQALKNIMPVLEVRARRVGGANYQVPVEVRPERRTTLGLRWLVNYARLRGEKTMEERLANEILDAANNAGASVKKREDTHKMAEANKAFAHYRW</sequence>
<organism>
    <name type="scientific">Bacillus cereus (strain ATCC 14579 / DSM 31 / CCUG 7414 / JCM 2152 / NBRC 15305 / NCIMB 9373 / NCTC 2599 / NRRL B-3711)</name>
    <dbReference type="NCBI Taxonomy" id="226900"/>
    <lineage>
        <taxon>Bacteria</taxon>
        <taxon>Bacillati</taxon>
        <taxon>Bacillota</taxon>
        <taxon>Bacilli</taxon>
        <taxon>Bacillales</taxon>
        <taxon>Bacillaceae</taxon>
        <taxon>Bacillus</taxon>
        <taxon>Bacillus cereus group</taxon>
    </lineage>
</organism>